<comment type="function">
    <text evidence="1">Binds to the 23S rRNA.</text>
</comment>
<comment type="subunit">
    <text evidence="1">Part of the 50S ribosomal subunit.</text>
</comment>
<comment type="similarity">
    <text evidence="1">Belongs to the universal ribosomal protein uL15 family.</text>
</comment>
<accession>Q749A6</accession>
<sequence>MELNELRPAVGATKDRKRIGRGPGSGHGKTATKGHKGQKARSGGSVKPGFEGGQMPMQRRLPKRGFTPLTRKEYALVNVGQLEVFEAGSCIDVEALLNAGLIGGVKDGLKVLADGDLTKPLTVKAHKFSAKAKEKIAAAGGTVEEISL</sequence>
<organism>
    <name type="scientific">Geobacter sulfurreducens (strain ATCC 51573 / DSM 12127 / PCA)</name>
    <dbReference type="NCBI Taxonomy" id="243231"/>
    <lineage>
        <taxon>Bacteria</taxon>
        <taxon>Pseudomonadati</taxon>
        <taxon>Thermodesulfobacteriota</taxon>
        <taxon>Desulfuromonadia</taxon>
        <taxon>Geobacterales</taxon>
        <taxon>Geobacteraceae</taxon>
        <taxon>Geobacter</taxon>
    </lineage>
</organism>
<dbReference type="EMBL" id="AE017180">
    <property type="protein sequence ID" value="AAR36231.1"/>
    <property type="molecule type" value="Genomic_DNA"/>
</dbReference>
<dbReference type="RefSeq" id="NP_953881.1">
    <property type="nucleotide sequence ID" value="NC_002939.5"/>
</dbReference>
<dbReference type="RefSeq" id="WP_010943467.1">
    <property type="nucleotide sequence ID" value="NC_002939.5"/>
</dbReference>
<dbReference type="SMR" id="Q749A6"/>
<dbReference type="FunCoup" id="Q749A6">
    <property type="interactions" value="660"/>
</dbReference>
<dbReference type="STRING" id="243231.GSU2838"/>
<dbReference type="EnsemblBacteria" id="AAR36231">
    <property type="protein sequence ID" value="AAR36231"/>
    <property type="gene ID" value="GSU2838"/>
</dbReference>
<dbReference type="KEGG" id="gsu:GSU2838"/>
<dbReference type="PATRIC" id="fig|243231.5.peg.2864"/>
<dbReference type="eggNOG" id="COG0200">
    <property type="taxonomic scope" value="Bacteria"/>
</dbReference>
<dbReference type="HOGENOM" id="CLU_055188_4_2_7"/>
<dbReference type="InParanoid" id="Q749A6"/>
<dbReference type="OrthoDB" id="9810293at2"/>
<dbReference type="Proteomes" id="UP000000577">
    <property type="component" value="Chromosome"/>
</dbReference>
<dbReference type="GO" id="GO:0022625">
    <property type="term" value="C:cytosolic large ribosomal subunit"/>
    <property type="evidence" value="ECO:0000318"/>
    <property type="project" value="GO_Central"/>
</dbReference>
<dbReference type="GO" id="GO:0019843">
    <property type="term" value="F:rRNA binding"/>
    <property type="evidence" value="ECO:0007669"/>
    <property type="project" value="UniProtKB-UniRule"/>
</dbReference>
<dbReference type="GO" id="GO:0003735">
    <property type="term" value="F:structural constituent of ribosome"/>
    <property type="evidence" value="ECO:0000318"/>
    <property type="project" value="GO_Central"/>
</dbReference>
<dbReference type="GO" id="GO:0006412">
    <property type="term" value="P:translation"/>
    <property type="evidence" value="ECO:0007669"/>
    <property type="project" value="UniProtKB-UniRule"/>
</dbReference>
<dbReference type="Gene3D" id="3.100.10.10">
    <property type="match status" value="1"/>
</dbReference>
<dbReference type="HAMAP" id="MF_01341">
    <property type="entry name" value="Ribosomal_uL15"/>
    <property type="match status" value="1"/>
</dbReference>
<dbReference type="InterPro" id="IPR030878">
    <property type="entry name" value="Ribosomal_uL15"/>
</dbReference>
<dbReference type="InterPro" id="IPR021131">
    <property type="entry name" value="Ribosomal_uL15/eL18"/>
</dbReference>
<dbReference type="InterPro" id="IPR036227">
    <property type="entry name" value="Ribosomal_uL15/eL18_sf"/>
</dbReference>
<dbReference type="InterPro" id="IPR005749">
    <property type="entry name" value="Ribosomal_uL15_bac-type"/>
</dbReference>
<dbReference type="InterPro" id="IPR001196">
    <property type="entry name" value="Ribosomal_uL15_CS"/>
</dbReference>
<dbReference type="NCBIfam" id="TIGR01071">
    <property type="entry name" value="rplO_bact"/>
    <property type="match status" value="1"/>
</dbReference>
<dbReference type="PANTHER" id="PTHR12934">
    <property type="entry name" value="50S RIBOSOMAL PROTEIN L15"/>
    <property type="match status" value="1"/>
</dbReference>
<dbReference type="PANTHER" id="PTHR12934:SF11">
    <property type="entry name" value="LARGE RIBOSOMAL SUBUNIT PROTEIN UL15M"/>
    <property type="match status" value="1"/>
</dbReference>
<dbReference type="Pfam" id="PF00828">
    <property type="entry name" value="Ribosomal_L27A"/>
    <property type="match status" value="1"/>
</dbReference>
<dbReference type="SUPFAM" id="SSF52080">
    <property type="entry name" value="Ribosomal proteins L15p and L18e"/>
    <property type="match status" value="1"/>
</dbReference>
<dbReference type="PROSITE" id="PS00475">
    <property type="entry name" value="RIBOSOMAL_L15"/>
    <property type="match status" value="1"/>
</dbReference>
<name>RL15_GEOSL</name>
<gene>
    <name evidence="1" type="primary">rplO</name>
    <name type="ordered locus">GSU2838</name>
</gene>
<evidence type="ECO:0000255" key="1">
    <source>
        <dbReference type="HAMAP-Rule" id="MF_01341"/>
    </source>
</evidence>
<evidence type="ECO:0000256" key="2">
    <source>
        <dbReference type="SAM" id="MobiDB-lite"/>
    </source>
</evidence>
<evidence type="ECO:0000305" key="3"/>
<protein>
    <recommendedName>
        <fullName evidence="1">Large ribosomal subunit protein uL15</fullName>
    </recommendedName>
    <alternativeName>
        <fullName evidence="3">50S ribosomal protein L15</fullName>
    </alternativeName>
</protein>
<proteinExistence type="inferred from homology"/>
<reference key="1">
    <citation type="journal article" date="2003" name="Science">
        <title>Genome of Geobacter sulfurreducens: metal reduction in subsurface environments.</title>
        <authorList>
            <person name="Methe B.A."/>
            <person name="Nelson K.E."/>
            <person name="Eisen J.A."/>
            <person name="Paulsen I.T."/>
            <person name="Nelson W.C."/>
            <person name="Heidelberg J.F."/>
            <person name="Wu D."/>
            <person name="Wu M."/>
            <person name="Ward N.L."/>
            <person name="Beanan M.J."/>
            <person name="Dodson R.J."/>
            <person name="Madupu R."/>
            <person name="Brinkac L.M."/>
            <person name="Daugherty S.C."/>
            <person name="DeBoy R.T."/>
            <person name="Durkin A.S."/>
            <person name="Gwinn M.L."/>
            <person name="Kolonay J.F."/>
            <person name="Sullivan S.A."/>
            <person name="Haft D.H."/>
            <person name="Selengut J."/>
            <person name="Davidsen T.M."/>
            <person name="Zafar N."/>
            <person name="White O."/>
            <person name="Tran B."/>
            <person name="Romero C."/>
            <person name="Forberger H.A."/>
            <person name="Weidman J.F."/>
            <person name="Khouri H.M."/>
            <person name="Feldblyum T.V."/>
            <person name="Utterback T.R."/>
            <person name="Van Aken S.E."/>
            <person name="Lovley D.R."/>
            <person name="Fraser C.M."/>
        </authorList>
    </citation>
    <scope>NUCLEOTIDE SEQUENCE [LARGE SCALE GENOMIC DNA]</scope>
    <source>
        <strain>ATCC 51573 / DSM 12127 / PCA</strain>
    </source>
</reference>
<feature type="chain" id="PRO_0000104727" description="Large ribosomal subunit protein uL15">
    <location>
        <begin position="1"/>
        <end position="148"/>
    </location>
</feature>
<feature type="region of interest" description="Disordered" evidence="2">
    <location>
        <begin position="1"/>
        <end position="61"/>
    </location>
</feature>
<feature type="compositionally biased region" description="Basic residues" evidence="2">
    <location>
        <begin position="30"/>
        <end position="39"/>
    </location>
</feature>
<keyword id="KW-1185">Reference proteome</keyword>
<keyword id="KW-0687">Ribonucleoprotein</keyword>
<keyword id="KW-0689">Ribosomal protein</keyword>
<keyword id="KW-0694">RNA-binding</keyword>
<keyword id="KW-0699">rRNA-binding</keyword>